<keyword id="KW-0002">3D-structure</keyword>
<keyword id="KW-0143">Chaperone</keyword>
<keyword id="KW-0963">Cytoplasm</keyword>
<keyword id="KW-1185">Reference proteome</keyword>
<keyword id="KW-0690">Ribosome biogenesis</keyword>
<keyword id="KW-0698">rRNA processing</keyword>
<name>RIMM_THET8</name>
<dbReference type="EMBL" id="AP008226">
    <property type="protein sequence ID" value="BAD70856.1"/>
    <property type="molecule type" value="Genomic_DNA"/>
</dbReference>
<dbReference type="RefSeq" id="WP_011228392.1">
    <property type="nucleotide sequence ID" value="NC_006461.1"/>
</dbReference>
<dbReference type="RefSeq" id="YP_144299.1">
    <property type="nucleotide sequence ID" value="NC_006461.1"/>
</dbReference>
<dbReference type="PDB" id="2DOG">
    <property type="method" value="NMR"/>
    <property type="chains" value="A=1-85"/>
</dbReference>
<dbReference type="PDB" id="2DYI">
    <property type="method" value="X-ray"/>
    <property type="resolution" value="2.00 A"/>
    <property type="chains" value="A=1-162"/>
</dbReference>
<dbReference type="PDB" id="3A1P">
    <property type="method" value="X-ray"/>
    <property type="resolution" value="2.30 A"/>
    <property type="chains" value="A/C=1-162"/>
</dbReference>
<dbReference type="PDBsum" id="2DOG"/>
<dbReference type="PDBsum" id="2DYI"/>
<dbReference type="PDBsum" id="3A1P"/>
<dbReference type="BMRB" id="Q5SJH5"/>
<dbReference type="SMR" id="Q5SJH5"/>
<dbReference type="EnsemblBacteria" id="BAD70856">
    <property type="protein sequence ID" value="BAD70856"/>
    <property type="gene ID" value="BAD70856"/>
</dbReference>
<dbReference type="GeneID" id="3170094"/>
<dbReference type="KEGG" id="ttj:TTHA1033"/>
<dbReference type="PATRIC" id="fig|300852.9.peg.1013"/>
<dbReference type="eggNOG" id="COG0806">
    <property type="taxonomic scope" value="Bacteria"/>
</dbReference>
<dbReference type="HOGENOM" id="CLU_077636_0_1_0"/>
<dbReference type="PhylomeDB" id="Q5SJH5"/>
<dbReference type="EvolutionaryTrace" id="Q5SJH5"/>
<dbReference type="Proteomes" id="UP000000532">
    <property type="component" value="Chromosome"/>
</dbReference>
<dbReference type="GO" id="GO:0005737">
    <property type="term" value="C:cytoplasm"/>
    <property type="evidence" value="ECO:0007669"/>
    <property type="project" value="UniProtKB-SubCell"/>
</dbReference>
<dbReference type="GO" id="GO:0005840">
    <property type="term" value="C:ribosome"/>
    <property type="evidence" value="ECO:0007669"/>
    <property type="project" value="InterPro"/>
</dbReference>
<dbReference type="GO" id="GO:0043022">
    <property type="term" value="F:ribosome binding"/>
    <property type="evidence" value="ECO:0007669"/>
    <property type="project" value="InterPro"/>
</dbReference>
<dbReference type="GO" id="GO:0042274">
    <property type="term" value="P:ribosomal small subunit biogenesis"/>
    <property type="evidence" value="ECO:0007669"/>
    <property type="project" value="UniProtKB-UniRule"/>
</dbReference>
<dbReference type="GO" id="GO:0006364">
    <property type="term" value="P:rRNA processing"/>
    <property type="evidence" value="ECO:0007669"/>
    <property type="project" value="UniProtKB-UniRule"/>
</dbReference>
<dbReference type="Gene3D" id="2.30.30.240">
    <property type="entry name" value="PRC-barrel domain"/>
    <property type="match status" value="1"/>
</dbReference>
<dbReference type="Gene3D" id="2.40.30.60">
    <property type="entry name" value="RimM"/>
    <property type="match status" value="1"/>
</dbReference>
<dbReference type="HAMAP" id="MF_00014">
    <property type="entry name" value="Ribosome_mat_RimM"/>
    <property type="match status" value="1"/>
</dbReference>
<dbReference type="InterPro" id="IPR027275">
    <property type="entry name" value="PRC-brl_dom"/>
</dbReference>
<dbReference type="InterPro" id="IPR011033">
    <property type="entry name" value="PRC_barrel-like_sf"/>
</dbReference>
<dbReference type="InterPro" id="IPR011961">
    <property type="entry name" value="RimM"/>
</dbReference>
<dbReference type="InterPro" id="IPR002676">
    <property type="entry name" value="RimM_N"/>
</dbReference>
<dbReference type="InterPro" id="IPR036976">
    <property type="entry name" value="RimM_N_sf"/>
</dbReference>
<dbReference type="InterPro" id="IPR009000">
    <property type="entry name" value="Transl_B-barrel_sf"/>
</dbReference>
<dbReference type="NCBIfam" id="TIGR02273">
    <property type="entry name" value="16S_RimM"/>
    <property type="match status" value="1"/>
</dbReference>
<dbReference type="NCBIfam" id="NF010403">
    <property type="entry name" value="PRK13829.1"/>
    <property type="match status" value="1"/>
</dbReference>
<dbReference type="PANTHER" id="PTHR33692">
    <property type="entry name" value="RIBOSOME MATURATION FACTOR RIMM"/>
    <property type="match status" value="1"/>
</dbReference>
<dbReference type="PANTHER" id="PTHR33692:SF1">
    <property type="entry name" value="RIBOSOME MATURATION FACTOR RIMM"/>
    <property type="match status" value="1"/>
</dbReference>
<dbReference type="Pfam" id="PF05239">
    <property type="entry name" value="PRC"/>
    <property type="match status" value="1"/>
</dbReference>
<dbReference type="Pfam" id="PF01782">
    <property type="entry name" value="RimM"/>
    <property type="match status" value="1"/>
</dbReference>
<dbReference type="SUPFAM" id="SSF50346">
    <property type="entry name" value="PRC-barrel domain"/>
    <property type="match status" value="1"/>
</dbReference>
<dbReference type="SUPFAM" id="SSF50447">
    <property type="entry name" value="Translation proteins"/>
    <property type="match status" value="1"/>
</dbReference>
<gene>
    <name evidence="1" type="primary">rimM</name>
    <name type="ordered locus">TTHA1033</name>
</gene>
<evidence type="ECO:0000255" key="1">
    <source>
        <dbReference type="HAMAP-Rule" id="MF_00014"/>
    </source>
</evidence>
<evidence type="ECO:0000269" key="2">
    <source>
    </source>
</evidence>
<evidence type="ECO:0007744" key="3">
    <source>
        <dbReference type="PDB" id="2DOG"/>
    </source>
</evidence>
<evidence type="ECO:0007744" key="4">
    <source>
        <dbReference type="PDB" id="3A1P"/>
    </source>
</evidence>
<evidence type="ECO:0007829" key="5">
    <source>
        <dbReference type="PDB" id="2DYI"/>
    </source>
</evidence>
<organism>
    <name type="scientific">Thermus thermophilus (strain ATCC 27634 / DSM 579 / HB8)</name>
    <dbReference type="NCBI Taxonomy" id="300852"/>
    <lineage>
        <taxon>Bacteria</taxon>
        <taxon>Thermotogati</taxon>
        <taxon>Deinococcota</taxon>
        <taxon>Deinococci</taxon>
        <taxon>Thermales</taxon>
        <taxon>Thermaceae</taxon>
        <taxon>Thermus</taxon>
    </lineage>
</organism>
<protein>
    <recommendedName>
        <fullName evidence="1">Ribosome maturation factor RimM</fullName>
    </recommendedName>
</protein>
<comment type="function">
    <text evidence="1">An accessory protein needed during the final step in the assembly of 30S ribosomal subunit, possibly for assembly of the head region. Essential for efficient processing of 16S rRNA. May be needed both before and after RbfA during the maturation of 16S rRNA. It has affinity for free ribosomal 30S subunits but not for 70S ribosomes.</text>
</comment>
<comment type="subunit">
    <text evidence="2">Binds ribosomal protein uS19.</text>
</comment>
<comment type="subcellular location">
    <subcellularLocation>
        <location evidence="1">Cytoplasm</location>
    </subcellularLocation>
</comment>
<comment type="domain">
    <text evidence="1 2">The isolated N-terminus (residues 1-80) forms a closed, 6-stranded beta barrel; it probably has the same form in full-length protein (PubMed:17616598). The PRC barrel domain binds ribosomal protein uS19 (By similarity).</text>
</comment>
<comment type="similarity">
    <text evidence="1">Belongs to the RimM family.</text>
</comment>
<accession>Q5SJH5</accession>
<feature type="chain" id="PRO_0000163380" description="Ribosome maturation factor RimM">
    <location>
        <begin position="1"/>
        <end position="162"/>
    </location>
</feature>
<feature type="domain" description="PRC barrel" evidence="1">
    <location>
        <begin position="86"/>
        <end position="160"/>
    </location>
</feature>
<feature type="strand" evidence="5">
    <location>
        <begin position="3"/>
        <end position="12"/>
    </location>
</feature>
<feature type="strand" evidence="5">
    <location>
        <begin position="14"/>
        <end position="17"/>
    </location>
</feature>
<feature type="strand" evidence="5">
    <location>
        <begin position="19"/>
        <end position="23"/>
    </location>
</feature>
<feature type="helix" evidence="5">
    <location>
        <begin position="25"/>
        <end position="29"/>
    </location>
</feature>
<feature type="strand" evidence="5">
    <location>
        <begin position="31"/>
        <end position="35"/>
    </location>
</feature>
<feature type="turn" evidence="5">
    <location>
        <begin position="36"/>
        <end position="38"/>
    </location>
</feature>
<feature type="strand" evidence="5">
    <location>
        <begin position="39"/>
        <end position="49"/>
    </location>
</feature>
<feature type="strand" evidence="5">
    <location>
        <begin position="52"/>
        <end position="57"/>
    </location>
</feature>
<feature type="helix" evidence="5">
    <location>
        <begin position="63"/>
        <end position="67"/>
    </location>
</feature>
<feature type="turn" evidence="5">
    <location>
        <begin position="68"/>
        <end position="71"/>
    </location>
</feature>
<feature type="strand" evidence="5">
    <location>
        <begin position="73"/>
        <end position="77"/>
    </location>
</feature>
<feature type="helix" evidence="5">
    <location>
        <begin position="78"/>
        <end position="80"/>
    </location>
</feature>
<feature type="helix" evidence="5">
    <location>
        <begin position="91"/>
        <end position="94"/>
    </location>
</feature>
<feature type="strand" evidence="5">
    <location>
        <begin position="98"/>
        <end position="101"/>
    </location>
</feature>
<feature type="strand" evidence="5">
    <location>
        <begin position="104"/>
        <end position="115"/>
    </location>
</feature>
<feature type="strand" evidence="5">
    <location>
        <begin position="118"/>
        <end position="125"/>
    </location>
</feature>
<feature type="helix" evidence="5">
    <location>
        <begin position="130"/>
        <end position="132"/>
    </location>
</feature>
<feature type="strand" evidence="5">
    <location>
        <begin position="136"/>
        <end position="139"/>
    </location>
</feature>
<feature type="strand" evidence="5">
    <location>
        <begin position="145"/>
        <end position="147"/>
    </location>
</feature>
<feature type="strand" evidence="5">
    <location>
        <begin position="152"/>
        <end position="154"/>
    </location>
</feature>
<feature type="turn" evidence="5">
    <location>
        <begin position="158"/>
        <end position="160"/>
    </location>
</feature>
<reference key="1">
    <citation type="submission" date="2004-11" db="EMBL/GenBank/DDBJ databases">
        <title>Complete genome sequence of Thermus thermophilus HB8.</title>
        <authorList>
            <person name="Masui R."/>
            <person name="Kurokawa K."/>
            <person name="Nakagawa N."/>
            <person name="Tokunaga F."/>
            <person name="Koyama Y."/>
            <person name="Shibata T."/>
            <person name="Oshima T."/>
            <person name="Yokoyama S."/>
            <person name="Yasunaga T."/>
            <person name="Kuramitsu S."/>
        </authorList>
    </citation>
    <scope>NUCLEOTIDE SEQUENCE [LARGE SCALE GENOMIC DNA]</scope>
    <source>
        <strain>ATCC 27634 / DSM 579 / HB8</strain>
    </source>
</reference>
<reference evidence="3" key="2">
    <citation type="journal article" date="2007" name="J. Bacteriol.">
        <title>Structural characterization of the ribosome maturation protein, RimM.</title>
        <authorList>
            <person name="Suzuki S."/>
            <person name="Tatsuguchi A."/>
            <person name="Matsumoto E."/>
            <person name="Kawazoe M."/>
            <person name="Kaminishi T."/>
            <person name="Shirouzu M."/>
            <person name="Muto Y."/>
            <person name="Takemoto C."/>
            <person name="Yokoyama S."/>
        </authorList>
    </citation>
    <scope>STRUCTURE BY NMR OF 1-85</scope>
    <scope>INTERACTION WITH US19</scope>
    <scope>DOMAIN</scope>
</reference>
<reference evidence="4" key="3">
    <citation type="submission" date="2007-03" db="PDB data bank">
        <title>Crystal structure of 16s ribosomal RNA processing protein RimM from Thermus thermophilus HB8.</title>
        <authorList>
            <consortium name="RIKEN structural genomics initiative (RSGI)"/>
        </authorList>
    </citation>
    <scope>X-RAY CRYSTALLOGRAPHY (2.0 ANGSTROMS)</scope>
</reference>
<proteinExistence type="evidence at protein level"/>
<sequence length="162" mass="18073">MRLVEIGRFGAPYALKGGLRFRGEPVVLHLERVYVEGHGWRAIEDLYRVGEELVVHLAGVTDRTLAEALVGLRVYAEVADLPPLEEGRYYYFALIGLPVYVEGRQVGEVVDILDAGAQDVLIIRGVGERLRDRAERLVPLQAPYVRVEEGSIHVDPIPGLFD</sequence>